<name>TBB1_ORYSJ</name>
<dbReference type="EMBL" id="AP003018">
    <property type="protein sequence ID" value="BAB39951.1"/>
    <property type="molecule type" value="Genomic_DNA"/>
</dbReference>
<dbReference type="EMBL" id="AP003631">
    <property type="protein sequence ID" value="BAB64211.1"/>
    <property type="molecule type" value="Genomic_DNA"/>
</dbReference>
<dbReference type="EMBL" id="AP008207">
    <property type="protein sequence ID" value="BAF04675.1"/>
    <property type="molecule type" value="Genomic_DNA"/>
</dbReference>
<dbReference type="EMBL" id="AP014957">
    <property type="protein sequence ID" value="BAS71607.1"/>
    <property type="molecule type" value="Genomic_DNA"/>
</dbReference>
<dbReference type="EMBL" id="AK122127">
    <property type="protein sequence ID" value="BAH00806.1"/>
    <property type="molecule type" value="mRNA"/>
</dbReference>
<dbReference type="EMBL" id="X78142">
    <property type="protein sequence ID" value="CAA55021.1"/>
    <property type="molecule type" value="mRNA"/>
</dbReference>
<dbReference type="PIR" id="S42480">
    <property type="entry name" value="S42480"/>
</dbReference>
<dbReference type="RefSeq" id="XP_015620877.1">
    <property type="nucleotide sequence ID" value="XM_015765391.1"/>
</dbReference>
<dbReference type="SMR" id="Q43594"/>
<dbReference type="FunCoup" id="Q43594">
    <property type="interactions" value="2071"/>
</dbReference>
<dbReference type="STRING" id="39947.Q43594"/>
<dbReference type="PaxDb" id="39947-Q43594"/>
<dbReference type="EnsemblPlants" id="Os01t0282800-02">
    <property type="protein sequence ID" value="Os01t0282800-02"/>
    <property type="gene ID" value="Os01g0282800"/>
</dbReference>
<dbReference type="Gramene" id="Os01t0282800-02">
    <property type="protein sequence ID" value="Os01t0282800-02"/>
    <property type="gene ID" value="Os01g0282800"/>
</dbReference>
<dbReference type="KEGG" id="dosa:Os01g0282800"/>
<dbReference type="eggNOG" id="KOG1375">
    <property type="taxonomic scope" value="Eukaryota"/>
</dbReference>
<dbReference type="HOGENOM" id="CLU_015718_1_1_1"/>
<dbReference type="InParanoid" id="Q43594"/>
<dbReference type="OMA" id="FLTCCAI"/>
<dbReference type="OrthoDB" id="10249382at2759"/>
<dbReference type="Proteomes" id="UP000000763">
    <property type="component" value="Chromosome 1"/>
</dbReference>
<dbReference type="Proteomes" id="UP000059680">
    <property type="component" value="Chromosome 1"/>
</dbReference>
<dbReference type="GO" id="GO:0005737">
    <property type="term" value="C:cytoplasm"/>
    <property type="evidence" value="ECO:0000318"/>
    <property type="project" value="GO_Central"/>
</dbReference>
<dbReference type="GO" id="GO:0005874">
    <property type="term" value="C:microtubule"/>
    <property type="evidence" value="ECO:0000318"/>
    <property type="project" value="GO_Central"/>
</dbReference>
<dbReference type="GO" id="GO:0005525">
    <property type="term" value="F:GTP binding"/>
    <property type="evidence" value="ECO:0000318"/>
    <property type="project" value="GO_Central"/>
</dbReference>
<dbReference type="GO" id="GO:0003924">
    <property type="term" value="F:GTPase activity"/>
    <property type="evidence" value="ECO:0007669"/>
    <property type="project" value="InterPro"/>
</dbReference>
<dbReference type="GO" id="GO:0046872">
    <property type="term" value="F:metal ion binding"/>
    <property type="evidence" value="ECO:0007669"/>
    <property type="project" value="UniProtKB-KW"/>
</dbReference>
<dbReference type="GO" id="GO:0005200">
    <property type="term" value="F:structural constituent of cytoskeleton"/>
    <property type="evidence" value="ECO:0000318"/>
    <property type="project" value="GO_Central"/>
</dbReference>
<dbReference type="GO" id="GO:0000226">
    <property type="term" value="P:microtubule cytoskeleton organization"/>
    <property type="evidence" value="ECO:0000318"/>
    <property type="project" value="GO_Central"/>
</dbReference>
<dbReference type="GO" id="GO:0000278">
    <property type="term" value="P:mitotic cell cycle"/>
    <property type="evidence" value="ECO:0000318"/>
    <property type="project" value="GO_Central"/>
</dbReference>
<dbReference type="CDD" id="cd02187">
    <property type="entry name" value="beta_tubulin"/>
    <property type="match status" value="1"/>
</dbReference>
<dbReference type="FunFam" id="1.10.287.600:FF:000002">
    <property type="entry name" value="Tubulin beta chain"/>
    <property type="match status" value="1"/>
</dbReference>
<dbReference type="FunFam" id="3.30.1330.20:FF:000002">
    <property type="entry name" value="Tubulin beta chain"/>
    <property type="match status" value="1"/>
</dbReference>
<dbReference type="FunFam" id="3.40.50.1440:FF:000005">
    <property type="entry name" value="Tubulin beta chain"/>
    <property type="match status" value="1"/>
</dbReference>
<dbReference type="Gene3D" id="1.10.287.600">
    <property type="entry name" value="Helix hairpin bin"/>
    <property type="match status" value="1"/>
</dbReference>
<dbReference type="Gene3D" id="3.30.1330.20">
    <property type="entry name" value="Tubulin/FtsZ, C-terminal domain"/>
    <property type="match status" value="1"/>
</dbReference>
<dbReference type="Gene3D" id="3.40.50.1440">
    <property type="entry name" value="Tubulin/FtsZ, GTPase domain"/>
    <property type="match status" value="1"/>
</dbReference>
<dbReference type="InterPro" id="IPR013838">
    <property type="entry name" value="Beta-tubulin_BS"/>
</dbReference>
<dbReference type="InterPro" id="IPR002453">
    <property type="entry name" value="Beta_tubulin"/>
</dbReference>
<dbReference type="InterPro" id="IPR008280">
    <property type="entry name" value="Tub_FtsZ_C"/>
</dbReference>
<dbReference type="InterPro" id="IPR000217">
    <property type="entry name" value="Tubulin"/>
</dbReference>
<dbReference type="InterPro" id="IPR037103">
    <property type="entry name" value="Tubulin/FtsZ-like_C"/>
</dbReference>
<dbReference type="InterPro" id="IPR018316">
    <property type="entry name" value="Tubulin/FtsZ_2-layer-sand-dom"/>
</dbReference>
<dbReference type="InterPro" id="IPR036525">
    <property type="entry name" value="Tubulin/FtsZ_GTPase_sf"/>
</dbReference>
<dbReference type="InterPro" id="IPR023123">
    <property type="entry name" value="Tubulin_C"/>
</dbReference>
<dbReference type="InterPro" id="IPR017975">
    <property type="entry name" value="Tubulin_CS"/>
</dbReference>
<dbReference type="InterPro" id="IPR003008">
    <property type="entry name" value="Tubulin_FtsZ_GTPase"/>
</dbReference>
<dbReference type="PANTHER" id="PTHR11588">
    <property type="entry name" value="TUBULIN"/>
    <property type="match status" value="1"/>
</dbReference>
<dbReference type="Pfam" id="PF00091">
    <property type="entry name" value="Tubulin"/>
    <property type="match status" value="1"/>
</dbReference>
<dbReference type="Pfam" id="PF03953">
    <property type="entry name" value="Tubulin_C"/>
    <property type="match status" value="1"/>
</dbReference>
<dbReference type="PRINTS" id="PR01163">
    <property type="entry name" value="BETATUBULIN"/>
</dbReference>
<dbReference type="PRINTS" id="PR01161">
    <property type="entry name" value="TUBULIN"/>
</dbReference>
<dbReference type="SMART" id="SM00864">
    <property type="entry name" value="Tubulin"/>
    <property type="match status" value="1"/>
</dbReference>
<dbReference type="SMART" id="SM00865">
    <property type="entry name" value="Tubulin_C"/>
    <property type="match status" value="1"/>
</dbReference>
<dbReference type="SUPFAM" id="SSF55307">
    <property type="entry name" value="Tubulin C-terminal domain-like"/>
    <property type="match status" value="1"/>
</dbReference>
<dbReference type="SUPFAM" id="SSF52490">
    <property type="entry name" value="Tubulin nucleotide-binding domain-like"/>
    <property type="match status" value="1"/>
</dbReference>
<dbReference type="PROSITE" id="PS00227">
    <property type="entry name" value="TUBULIN"/>
    <property type="match status" value="1"/>
</dbReference>
<dbReference type="PROSITE" id="PS00228">
    <property type="entry name" value="TUBULIN_B_AUTOREG"/>
    <property type="match status" value="1"/>
</dbReference>
<feature type="chain" id="PRO_0000048363" description="Tubulin beta-1 chain">
    <location>
        <begin position="1"/>
        <end position="447"/>
    </location>
</feature>
<feature type="region of interest" description="Disordered" evidence="3">
    <location>
        <begin position="411"/>
        <end position="447"/>
    </location>
</feature>
<feature type="compositionally biased region" description="Polar residues" evidence="3">
    <location>
        <begin position="411"/>
        <end position="427"/>
    </location>
</feature>
<feature type="compositionally biased region" description="Acidic residues" evidence="3">
    <location>
        <begin position="429"/>
        <end position="447"/>
    </location>
</feature>
<feature type="binding site" evidence="2">
    <location>
        <position position="11"/>
    </location>
    <ligand>
        <name>GTP</name>
        <dbReference type="ChEBI" id="CHEBI:37565"/>
    </ligand>
</feature>
<feature type="binding site" evidence="1">
    <location>
        <position position="69"/>
    </location>
    <ligand>
        <name>GTP</name>
        <dbReference type="ChEBI" id="CHEBI:37565"/>
    </ligand>
</feature>
<feature type="binding site" evidence="1">
    <location>
        <position position="69"/>
    </location>
    <ligand>
        <name>Mg(2+)</name>
        <dbReference type="ChEBI" id="CHEBI:18420"/>
    </ligand>
</feature>
<feature type="binding site" evidence="2">
    <location>
        <position position="138"/>
    </location>
    <ligand>
        <name>GTP</name>
        <dbReference type="ChEBI" id="CHEBI:37565"/>
    </ligand>
</feature>
<feature type="binding site" evidence="2">
    <location>
        <position position="142"/>
    </location>
    <ligand>
        <name>GTP</name>
        <dbReference type="ChEBI" id="CHEBI:37565"/>
    </ligand>
</feature>
<feature type="binding site" evidence="2">
    <location>
        <position position="143"/>
    </location>
    <ligand>
        <name>GTP</name>
        <dbReference type="ChEBI" id="CHEBI:37565"/>
    </ligand>
</feature>
<feature type="binding site" evidence="2">
    <location>
        <position position="144"/>
    </location>
    <ligand>
        <name>GTP</name>
        <dbReference type="ChEBI" id="CHEBI:37565"/>
    </ligand>
</feature>
<feature type="binding site" evidence="2">
    <location>
        <position position="204"/>
    </location>
    <ligand>
        <name>GTP</name>
        <dbReference type="ChEBI" id="CHEBI:37565"/>
    </ligand>
</feature>
<feature type="binding site" evidence="2">
    <location>
        <position position="226"/>
    </location>
    <ligand>
        <name>GTP</name>
        <dbReference type="ChEBI" id="CHEBI:37565"/>
    </ligand>
</feature>
<feature type="sequence conflict" description="In Ref. 6; CAA55021." evidence="5" ref="6">
    <original>A</original>
    <variation>G</variation>
    <location>
        <position position="364"/>
    </location>
</feature>
<feature type="sequence conflict" description="In Ref. 6; CAA55021." evidence="5" ref="6">
    <original>F</original>
    <variation>S</variation>
    <location>
        <position position="394"/>
    </location>
</feature>
<gene>
    <name type="primary">TUBB1</name>
    <name type="synonym">OSTB-34</name>
    <name type="synonym">TUB1</name>
    <name type="ordered locus">Os01g0282800</name>
    <name type="ordered locus">LOC_Os01g18050</name>
    <name type="ORF">OSJNBa0004B13.5</name>
    <name type="ORF">P0581F09.13</name>
</gene>
<keyword id="KW-0963">Cytoplasm</keyword>
<keyword id="KW-0206">Cytoskeleton</keyword>
<keyword id="KW-0342">GTP-binding</keyword>
<keyword id="KW-0460">Magnesium</keyword>
<keyword id="KW-0479">Metal-binding</keyword>
<keyword id="KW-0493">Microtubule</keyword>
<keyword id="KW-0547">Nucleotide-binding</keyword>
<keyword id="KW-1185">Reference proteome</keyword>
<reference key="1">
    <citation type="journal article" date="2002" name="Nature">
        <title>The genome sequence and structure of rice chromosome 1.</title>
        <authorList>
            <person name="Sasaki T."/>
            <person name="Matsumoto T."/>
            <person name="Yamamoto K."/>
            <person name="Sakata K."/>
            <person name="Baba T."/>
            <person name="Katayose Y."/>
            <person name="Wu J."/>
            <person name="Niimura Y."/>
            <person name="Cheng Z."/>
            <person name="Nagamura Y."/>
            <person name="Antonio B.A."/>
            <person name="Kanamori H."/>
            <person name="Hosokawa S."/>
            <person name="Masukawa M."/>
            <person name="Arikawa K."/>
            <person name="Chiden Y."/>
            <person name="Hayashi M."/>
            <person name="Okamoto M."/>
            <person name="Ando T."/>
            <person name="Aoki H."/>
            <person name="Arita K."/>
            <person name="Hamada M."/>
            <person name="Harada C."/>
            <person name="Hijishita S."/>
            <person name="Honda M."/>
            <person name="Ichikawa Y."/>
            <person name="Idonuma A."/>
            <person name="Iijima M."/>
            <person name="Ikeda M."/>
            <person name="Ikeno M."/>
            <person name="Ito S."/>
            <person name="Ito T."/>
            <person name="Ito Y."/>
            <person name="Ito Y."/>
            <person name="Iwabuchi A."/>
            <person name="Kamiya K."/>
            <person name="Karasawa W."/>
            <person name="Katagiri S."/>
            <person name="Kikuta A."/>
            <person name="Kobayashi N."/>
            <person name="Kono I."/>
            <person name="Machita K."/>
            <person name="Maehara T."/>
            <person name="Mizuno H."/>
            <person name="Mizubayashi T."/>
            <person name="Mukai Y."/>
            <person name="Nagasaki H."/>
            <person name="Nakashima M."/>
            <person name="Nakama Y."/>
            <person name="Nakamichi Y."/>
            <person name="Nakamura M."/>
            <person name="Namiki N."/>
            <person name="Negishi M."/>
            <person name="Ohta I."/>
            <person name="Ono N."/>
            <person name="Saji S."/>
            <person name="Sakai K."/>
            <person name="Shibata M."/>
            <person name="Shimokawa T."/>
            <person name="Shomura A."/>
            <person name="Song J."/>
            <person name="Takazaki Y."/>
            <person name="Terasawa K."/>
            <person name="Tsuji K."/>
            <person name="Waki K."/>
            <person name="Yamagata H."/>
            <person name="Yamane H."/>
            <person name="Yoshiki S."/>
            <person name="Yoshihara R."/>
            <person name="Yukawa K."/>
            <person name="Zhong H."/>
            <person name="Iwama H."/>
            <person name="Endo T."/>
            <person name="Ito H."/>
            <person name="Hahn J.H."/>
            <person name="Kim H.-I."/>
            <person name="Eun M.-Y."/>
            <person name="Yano M."/>
            <person name="Jiang J."/>
            <person name="Gojobori T."/>
        </authorList>
    </citation>
    <scope>NUCLEOTIDE SEQUENCE [LARGE SCALE GENOMIC DNA]</scope>
    <source>
        <strain>cv. Nipponbare</strain>
    </source>
</reference>
<reference key="2">
    <citation type="journal article" date="2005" name="Nature">
        <title>The map-based sequence of the rice genome.</title>
        <authorList>
            <consortium name="International rice genome sequencing project (IRGSP)"/>
        </authorList>
    </citation>
    <scope>NUCLEOTIDE SEQUENCE [LARGE SCALE GENOMIC DNA]</scope>
    <source>
        <strain>cv. Nipponbare</strain>
    </source>
</reference>
<reference key="3">
    <citation type="journal article" date="2008" name="Nucleic Acids Res.">
        <title>The rice annotation project database (RAP-DB): 2008 update.</title>
        <authorList>
            <consortium name="The rice annotation project (RAP)"/>
        </authorList>
    </citation>
    <scope>GENOME REANNOTATION</scope>
    <source>
        <strain>cv. Nipponbare</strain>
    </source>
</reference>
<reference key="4">
    <citation type="journal article" date="2013" name="Rice">
        <title>Improvement of the Oryza sativa Nipponbare reference genome using next generation sequence and optical map data.</title>
        <authorList>
            <person name="Kawahara Y."/>
            <person name="de la Bastide M."/>
            <person name="Hamilton J.P."/>
            <person name="Kanamori H."/>
            <person name="McCombie W.R."/>
            <person name="Ouyang S."/>
            <person name="Schwartz D.C."/>
            <person name="Tanaka T."/>
            <person name="Wu J."/>
            <person name="Zhou S."/>
            <person name="Childs K.L."/>
            <person name="Davidson R.M."/>
            <person name="Lin H."/>
            <person name="Quesada-Ocampo L."/>
            <person name="Vaillancourt B."/>
            <person name="Sakai H."/>
            <person name="Lee S.S."/>
            <person name="Kim J."/>
            <person name="Numa H."/>
            <person name="Itoh T."/>
            <person name="Buell C.R."/>
            <person name="Matsumoto T."/>
        </authorList>
    </citation>
    <scope>GENOME REANNOTATION</scope>
    <source>
        <strain>cv. Nipponbare</strain>
    </source>
</reference>
<reference key="5">
    <citation type="journal article" date="2003" name="Science">
        <title>Collection, mapping, and annotation of over 28,000 cDNA clones from japonica rice.</title>
        <authorList>
            <consortium name="The rice full-length cDNA consortium"/>
        </authorList>
    </citation>
    <scope>NUCLEOTIDE SEQUENCE [LARGE SCALE MRNA]</scope>
    <source>
        <strain>cv. Nipponbare</strain>
    </source>
</reference>
<reference key="6">
    <citation type="journal article" date="1995" name="Plant Physiol.">
        <title>Three rice cDNA clones encoding different beta-tubulin isotypes.</title>
        <authorList>
            <person name="Breviario D."/>
            <person name="Giani S."/>
            <person name="Meoni C."/>
        </authorList>
    </citation>
    <scope>NUCLEOTIDE SEQUENCE [MRNA] OF 59-441</scope>
    <source>
        <tissue>Coleoptile</tissue>
    </source>
</reference>
<reference key="7">
    <citation type="journal article" date="2003" name="Plant Cell Physiol.">
        <title>Expression analyses of beta-tubulin isotype genes in rice.</title>
        <authorList>
            <person name="Yoshikawa M."/>
            <person name="Yang G."/>
            <person name="Kawaguchi K."/>
            <person name="Komatsu S."/>
        </authorList>
    </citation>
    <scope>TISSUE SPECIFICITY</scope>
    <scope>INDUCTION</scope>
    <scope>NOMENCLATURE</scope>
</reference>
<protein>
    <recommendedName>
        <fullName>Tubulin beta-1 chain</fullName>
    </recommendedName>
    <alternativeName>
        <fullName>Beta-1-tubulin</fullName>
    </alternativeName>
</protein>
<comment type="function">
    <text>Tubulin is the major constituent of microtubules, a cylinder consisting of laterally associated linear protofilaments composed of alpha- and beta-tubulin heterodimers. Microtubules grow by the addition of GTP-tubulin dimers to the microtubule end, where a stabilizing cap forms. Below the cap, tubulin dimers are in GDP-bound state, owing to GTPase activity of alpha-tubulin.</text>
</comment>
<comment type="cofactor">
    <cofactor evidence="1">
        <name>Mg(2+)</name>
        <dbReference type="ChEBI" id="CHEBI:18420"/>
    </cofactor>
</comment>
<comment type="subunit">
    <text>Dimer of alpha and beta chains. A typical microtubule is a hollow water-filled tube with an outer diameter of 25 nm and an inner diameter of 15 nM. Alpha-beta heterodimers associate head-to-tail to form protofilaments running lengthwise along the microtubule wall with the beta-tubulin subunit facing the microtubule plus end conferring a structural polarity. Microtubules usually have 13 protofilaments but different protofilament numbers can be found in some organisms and specialized cells.</text>
</comment>
<comment type="subcellular location">
    <subcellularLocation>
        <location>Cytoplasm</location>
        <location>Cytoskeleton</location>
    </subcellularLocation>
</comment>
<comment type="tissue specificity">
    <text evidence="4">Expressed in leaf sheaths.</text>
</comment>
<comment type="induction">
    <text evidence="4">Down-regulated by abscisic acid (ABA).</text>
</comment>
<comment type="similarity">
    <text evidence="5">Belongs to the tubulin family.</text>
</comment>
<organism>
    <name type="scientific">Oryza sativa subsp. japonica</name>
    <name type="common">Rice</name>
    <dbReference type="NCBI Taxonomy" id="39947"/>
    <lineage>
        <taxon>Eukaryota</taxon>
        <taxon>Viridiplantae</taxon>
        <taxon>Streptophyta</taxon>
        <taxon>Embryophyta</taxon>
        <taxon>Tracheophyta</taxon>
        <taxon>Spermatophyta</taxon>
        <taxon>Magnoliopsida</taxon>
        <taxon>Liliopsida</taxon>
        <taxon>Poales</taxon>
        <taxon>Poaceae</taxon>
        <taxon>BOP clade</taxon>
        <taxon>Oryzoideae</taxon>
        <taxon>Oryzeae</taxon>
        <taxon>Oryzinae</taxon>
        <taxon>Oryza</taxon>
        <taxon>Oryza sativa</taxon>
    </lineage>
</organism>
<proteinExistence type="evidence at transcript level"/>
<evidence type="ECO:0000250" key="1">
    <source>
        <dbReference type="UniProtKB" id="P68363"/>
    </source>
</evidence>
<evidence type="ECO:0000250" key="2">
    <source>
        <dbReference type="UniProtKB" id="Q13509"/>
    </source>
</evidence>
<evidence type="ECO:0000256" key="3">
    <source>
        <dbReference type="SAM" id="MobiDB-lite"/>
    </source>
</evidence>
<evidence type="ECO:0000269" key="4">
    <source>
    </source>
</evidence>
<evidence type="ECO:0000305" key="5"/>
<sequence>MREILHIQGGQCGNQIGSKFWEVVCDEHGIDPTGRYVGTSDLQLERVNVYYNEASCGRFVPRAVLMDLEPGTMDSVRTGPYGQIFRPDNFVFGQSGAGNNWAKGHYTEGAELIDSVLDVVRKEAENCDCLQGFQVCHSLGGGTGSGMGTLLISKIREEYPDRMMLTFSVFPSPKVSDTVVEPYNATLSVHQLVENADECMVLDNEALYDICFRTLKLTTPSFGDLNHLISATMSGVTCCLRFPGQLNSDLRKLAVNLIPFPRLHFFMVGFAPLTSRGSQQYRALTVPELTQQMWDAKNMMCAADPRHGRYLTASAMFRGKMSTKEVDEQMINVQNKNSSYFVEWIPNNVKSSVCDIPPRGLSMASTFIGNSTSIQEMFRRVSEQFTAMFRRKAFLHWYTGEGMDEMEFTEAESNMNDLVSEYQQYQDATADEEGDYEDEEEQVPEDE</sequence>
<accession>Q43594</accession>
<accession>Q0JNK3</accession>
<accession>Q9ARZ3</accession>